<comment type="function">
    <text evidence="1">Poorly processive, error-prone DNA polymerase involved in untargeted mutagenesis. Copies undamaged DNA at stalled replication forks, which arise in vivo from mismatched or misaligned primer ends. These misaligned primers can be extended by PolIV. Exhibits no 3'-5' exonuclease (proofreading) activity. May be involved in translesional synthesis, in conjunction with the beta clamp from PolIII.</text>
</comment>
<comment type="catalytic activity">
    <reaction evidence="1">
        <text>DNA(n) + a 2'-deoxyribonucleoside 5'-triphosphate = DNA(n+1) + diphosphate</text>
        <dbReference type="Rhea" id="RHEA:22508"/>
        <dbReference type="Rhea" id="RHEA-COMP:17339"/>
        <dbReference type="Rhea" id="RHEA-COMP:17340"/>
        <dbReference type="ChEBI" id="CHEBI:33019"/>
        <dbReference type="ChEBI" id="CHEBI:61560"/>
        <dbReference type="ChEBI" id="CHEBI:173112"/>
        <dbReference type="EC" id="2.7.7.7"/>
    </reaction>
</comment>
<comment type="cofactor">
    <cofactor evidence="1">
        <name>Mg(2+)</name>
        <dbReference type="ChEBI" id="CHEBI:18420"/>
    </cofactor>
    <text evidence="1">Binds 2 magnesium ions per subunit.</text>
</comment>
<comment type="subunit">
    <text evidence="1">Monomer.</text>
</comment>
<comment type="subcellular location">
    <subcellularLocation>
        <location evidence="1">Cytoplasm</location>
    </subcellularLocation>
</comment>
<comment type="similarity">
    <text evidence="1">Belongs to the DNA polymerase type-Y family.</text>
</comment>
<comment type="sequence caution" evidence="2">
    <conflict type="erroneous initiation">
        <sequence resource="EMBL-CDS" id="AAM84540"/>
    </conflict>
</comment>
<comment type="sequence caution" evidence="2">
    <conflict type="erroneous initiation">
        <sequence resource="EMBL-CDS" id="AAS60968"/>
    </conflict>
</comment>
<evidence type="ECO:0000255" key="1">
    <source>
        <dbReference type="HAMAP-Rule" id="MF_01113"/>
    </source>
</evidence>
<evidence type="ECO:0000305" key="2"/>
<gene>
    <name evidence="1" type="primary">dinB</name>
    <name type="synonym">dinP</name>
    <name type="ordered locus">YPO3231</name>
    <name type="ordered locus">y0959</name>
    <name type="ordered locus">YP_0702</name>
</gene>
<dbReference type="EC" id="2.7.7.7" evidence="1"/>
<dbReference type="EMBL" id="AL590842">
    <property type="protein sequence ID" value="CAL21825.1"/>
    <property type="molecule type" value="Genomic_DNA"/>
</dbReference>
<dbReference type="EMBL" id="AE009952">
    <property type="protein sequence ID" value="AAM84540.1"/>
    <property type="status" value="ALT_INIT"/>
    <property type="molecule type" value="Genomic_DNA"/>
</dbReference>
<dbReference type="EMBL" id="AE017042">
    <property type="protein sequence ID" value="AAS60968.1"/>
    <property type="status" value="ALT_INIT"/>
    <property type="molecule type" value="Genomic_DNA"/>
</dbReference>
<dbReference type="PIR" id="AF0392">
    <property type="entry name" value="AF0392"/>
</dbReference>
<dbReference type="RefSeq" id="WP_002208708.1">
    <property type="nucleotide sequence ID" value="NZ_WHLN01000006.1"/>
</dbReference>
<dbReference type="RefSeq" id="YP_002348133.1">
    <property type="nucleotide sequence ID" value="NC_003143.1"/>
</dbReference>
<dbReference type="SMR" id="Q8ZBZ9"/>
<dbReference type="IntAct" id="Q8ZBZ9">
    <property type="interactions" value="10"/>
</dbReference>
<dbReference type="STRING" id="214092.YPO3231"/>
<dbReference type="PaxDb" id="214092-YPO3231"/>
<dbReference type="EnsemblBacteria" id="AAS60968">
    <property type="protein sequence ID" value="AAS60968"/>
    <property type="gene ID" value="YP_0702"/>
</dbReference>
<dbReference type="GeneID" id="57975488"/>
<dbReference type="KEGG" id="ype:YPO3231"/>
<dbReference type="KEGG" id="ypk:y0959"/>
<dbReference type="KEGG" id="ypm:YP_0702"/>
<dbReference type="PATRIC" id="fig|214092.21.peg.3691"/>
<dbReference type="eggNOG" id="COG0389">
    <property type="taxonomic scope" value="Bacteria"/>
</dbReference>
<dbReference type="HOGENOM" id="CLU_012348_1_2_6"/>
<dbReference type="OMA" id="TRCKPDG"/>
<dbReference type="OrthoDB" id="9808813at2"/>
<dbReference type="Proteomes" id="UP000000815">
    <property type="component" value="Chromosome"/>
</dbReference>
<dbReference type="Proteomes" id="UP000001019">
    <property type="component" value="Chromosome"/>
</dbReference>
<dbReference type="Proteomes" id="UP000002490">
    <property type="component" value="Chromosome"/>
</dbReference>
<dbReference type="GO" id="GO:0005737">
    <property type="term" value="C:cytoplasm"/>
    <property type="evidence" value="ECO:0007669"/>
    <property type="project" value="UniProtKB-SubCell"/>
</dbReference>
<dbReference type="GO" id="GO:0003684">
    <property type="term" value="F:damaged DNA binding"/>
    <property type="evidence" value="ECO:0007669"/>
    <property type="project" value="InterPro"/>
</dbReference>
<dbReference type="GO" id="GO:0003887">
    <property type="term" value="F:DNA-directed DNA polymerase activity"/>
    <property type="evidence" value="ECO:0000318"/>
    <property type="project" value="GO_Central"/>
</dbReference>
<dbReference type="GO" id="GO:0000287">
    <property type="term" value="F:magnesium ion binding"/>
    <property type="evidence" value="ECO:0007669"/>
    <property type="project" value="UniProtKB-UniRule"/>
</dbReference>
<dbReference type="GO" id="GO:0006261">
    <property type="term" value="P:DNA-templated DNA replication"/>
    <property type="evidence" value="ECO:0007669"/>
    <property type="project" value="UniProtKB-UniRule"/>
</dbReference>
<dbReference type="GO" id="GO:0042276">
    <property type="term" value="P:error-prone translesion synthesis"/>
    <property type="evidence" value="ECO:0000318"/>
    <property type="project" value="GO_Central"/>
</dbReference>
<dbReference type="GO" id="GO:0009432">
    <property type="term" value="P:SOS response"/>
    <property type="evidence" value="ECO:0000318"/>
    <property type="project" value="GO_Central"/>
</dbReference>
<dbReference type="CDD" id="cd03586">
    <property type="entry name" value="PolY_Pol_IV_kappa"/>
    <property type="match status" value="1"/>
</dbReference>
<dbReference type="FunFam" id="1.10.150.20:FF:000019">
    <property type="entry name" value="DNA polymerase IV"/>
    <property type="match status" value="1"/>
</dbReference>
<dbReference type="FunFam" id="3.30.1490.100:FF:000002">
    <property type="entry name" value="DNA polymerase IV"/>
    <property type="match status" value="1"/>
</dbReference>
<dbReference type="FunFam" id="3.30.70.270:FF:000002">
    <property type="entry name" value="DNA polymerase IV"/>
    <property type="match status" value="1"/>
</dbReference>
<dbReference type="FunFam" id="3.40.1170.60:FF:000001">
    <property type="entry name" value="DNA polymerase IV"/>
    <property type="match status" value="1"/>
</dbReference>
<dbReference type="Gene3D" id="3.30.70.270">
    <property type="match status" value="1"/>
</dbReference>
<dbReference type="Gene3D" id="3.40.1170.60">
    <property type="match status" value="1"/>
</dbReference>
<dbReference type="Gene3D" id="1.10.150.20">
    <property type="entry name" value="5' to 3' exonuclease, C-terminal subdomain"/>
    <property type="match status" value="1"/>
</dbReference>
<dbReference type="Gene3D" id="3.30.1490.100">
    <property type="entry name" value="DNA polymerase, Y-family, little finger domain"/>
    <property type="match status" value="1"/>
</dbReference>
<dbReference type="HAMAP" id="MF_01113">
    <property type="entry name" value="DNApol_IV"/>
    <property type="match status" value="1"/>
</dbReference>
<dbReference type="InterPro" id="IPR043502">
    <property type="entry name" value="DNA/RNA_pol_sf"/>
</dbReference>
<dbReference type="InterPro" id="IPR036775">
    <property type="entry name" value="DNA_pol_Y-fam_lit_finger_sf"/>
</dbReference>
<dbReference type="InterPro" id="IPR017961">
    <property type="entry name" value="DNA_pol_Y-fam_little_finger"/>
</dbReference>
<dbReference type="InterPro" id="IPR050116">
    <property type="entry name" value="DNA_polymerase-Y"/>
</dbReference>
<dbReference type="InterPro" id="IPR022880">
    <property type="entry name" value="DNApol_IV"/>
</dbReference>
<dbReference type="InterPro" id="IPR053848">
    <property type="entry name" value="IMS_HHH_1"/>
</dbReference>
<dbReference type="InterPro" id="IPR043128">
    <property type="entry name" value="Rev_trsase/Diguanyl_cyclase"/>
</dbReference>
<dbReference type="InterPro" id="IPR001126">
    <property type="entry name" value="UmuC"/>
</dbReference>
<dbReference type="NCBIfam" id="NF002677">
    <property type="entry name" value="PRK02406.1"/>
    <property type="match status" value="1"/>
</dbReference>
<dbReference type="PANTHER" id="PTHR11076:SF33">
    <property type="entry name" value="DNA POLYMERASE KAPPA"/>
    <property type="match status" value="1"/>
</dbReference>
<dbReference type="PANTHER" id="PTHR11076">
    <property type="entry name" value="DNA REPAIR POLYMERASE UMUC / TRANSFERASE FAMILY MEMBER"/>
    <property type="match status" value="1"/>
</dbReference>
<dbReference type="Pfam" id="PF00817">
    <property type="entry name" value="IMS"/>
    <property type="match status" value="1"/>
</dbReference>
<dbReference type="Pfam" id="PF11799">
    <property type="entry name" value="IMS_C"/>
    <property type="match status" value="1"/>
</dbReference>
<dbReference type="Pfam" id="PF21999">
    <property type="entry name" value="IMS_HHH_1"/>
    <property type="match status" value="1"/>
</dbReference>
<dbReference type="SUPFAM" id="SSF56672">
    <property type="entry name" value="DNA/RNA polymerases"/>
    <property type="match status" value="1"/>
</dbReference>
<dbReference type="SUPFAM" id="SSF100879">
    <property type="entry name" value="Lesion bypass DNA polymerase (Y-family), little finger domain"/>
    <property type="match status" value="1"/>
</dbReference>
<dbReference type="PROSITE" id="PS50173">
    <property type="entry name" value="UMUC"/>
    <property type="match status" value="1"/>
</dbReference>
<proteinExistence type="inferred from homology"/>
<feature type="chain" id="PRO_0000173968" description="DNA polymerase IV">
    <location>
        <begin position="1"/>
        <end position="352"/>
    </location>
</feature>
<feature type="domain" description="UmuC" evidence="1">
    <location>
        <begin position="4"/>
        <end position="185"/>
    </location>
</feature>
<feature type="active site" evidence="1">
    <location>
        <position position="104"/>
    </location>
</feature>
<feature type="binding site" evidence="1">
    <location>
        <position position="8"/>
    </location>
    <ligand>
        <name>Mg(2+)</name>
        <dbReference type="ChEBI" id="CHEBI:18420"/>
    </ligand>
</feature>
<feature type="binding site" evidence="1">
    <location>
        <position position="103"/>
    </location>
    <ligand>
        <name>Mg(2+)</name>
        <dbReference type="ChEBI" id="CHEBI:18420"/>
    </ligand>
</feature>
<feature type="site" description="Substrate discrimination" evidence="1">
    <location>
        <position position="13"/>
    </location>
</feature>
<feature type="sequence conflict" description="In Ref. 2; AAM84540." evidence="2" ref="2">
    <original>A</original>
    <variation>V</variation>
    <location>
        <position position="325"/>
    </location>
</feature>
<sequence length="352" mass="39657">MRKIIHVDMDCFFAAVEMRDDPRLRDIPLAIGGSKERRGVISTANYPARRYGVRSAMPTAMAFKLCPQLTLLPGRMAAYKEASQHIREIFARYTPLIEPLSLDEAYLDVSDSLACGGSATLIAQEIRQSIASELNLTASAGIAPIKFLAKIASELNKPNGQYVITPNQIQPFLQDLPLSKIPGVGAVTAKRLQALGLVTCGDIQKYPLAELLKHFGKFGRVLWERSHGIDEREISPDRLRKSVGVEKTLAEDIYDWESCEALIEELYLELETRLRKVKPSLHIARQGVKLKFHDFQQTTQEHTWPVLNKVDLLEIAHAAWHERRAERGVRLVGLHVTLLDPQLERQLLLDWG</sequence>
<name>DPO4_YERPE</name>
<accession>Q8ZBZ9</accession>
<accession>Q0WC55</accession>
<reference key="1">
    <citation type="journal article" date="2001" name="Nature">
        <title>Genome sequence of Yersinia pestis, the causative agent of plague.</title>
        <authorList>
            <person name="Parkhill J."/>
            <person name="Wren B.W."/>
            <person name="Thomson N.R."/>
            <person name="Titball R.W."/>
            <person name="Holden M.T.G."/>
            <person name="Prentice M.B."/>
            <person name="Sebaihia M."/>
            <person name="James K.D."/>
            <person name="Churcher C.M."/>
            <person name="Mungall K.L."/>
            <person name="Baker S."/>
            <person name="Basham D."/>
            <person name="Bentley S.D."/>
            <person name="Brooks K."/>
            <person name="Cerdeno-Tarraga A.-M."/>
            <person name="Chillingworth T."/>
            <person name="Cronin A."/>
            <person name="Davies R.M."/>
            <person name="Davis P."/>
            <person name="Dougan G."/>
            <person name="Feltwell T."/>
            <person name="Hamlin N."/>
            <person name="Holroyd S."/>
            <person name="Jagels K."/>
            <person name="Karlyshev A.V."/>
            <person name="Leather S."/>
            <person name="Moule S."/>
            <person name="Oyston P.C.F."/>
            <person name="Quail M.A."/>
            <person name="Rutherford K.M."/>
            <person name="Simmonds M."/>
            <person name="Skelton J."/>
            <person name="Stevens K."/>
            <person name="Whitehead S."/>
            <person name="Barrell B.G."/>
        </authorList>
    </citation>
    <scope>NUCLEOTIDE SEQUENCE [LARGE SCALE GENOMIC DNA]</scope>
    <source>
        <strain>CO-92 / Biovar Orientalis</strain>
    </source>
</reference>
<reference key="2">
    <citation type="journal article" date="2002" name="J. Bacteriol.">
        <title>Genome sequence of Yersinia pestis KIM.</title>
        <authorList>
            <person name="Deng W."/>
            <person name="Burland V."/>
            <person name="Plunkett G. III"/>
            <person name="Boutin A."/>
            <person name="Mayhew G.F."/>
            <person name="Liss P."/>
            <person name="Perna N.T."/>
            <person name="Rose D.J."/>
            <person name="Mau B."/>
            <person name="Zhou S."/>
            <person name="Schwartz D.C."/>
            <person name="Fetherston J.D."/>
            <person name="Lindler L.E."/>
            <person name="Brubaker R.R."/>
            <person name="Plano G.V."/>
            <person name="Straley S.C."/>
            <person name="McDonough K.A."/>
            <person name="Nilles M.L."/>
            <person name="Matson J.S."/>
            <person name="Blattner F.R."/>
            <person name="Perry R.D."/>
        </authorList>
    </citation>
    <scope>NUCLEOTIDE SEQUENCE [LARGE SCALE GENOMIC DNA]</scope>
    <source>
        <strain>KIM10+ / Biovar Mediaevalis</strain>
    </source>
</reference>
<reference key="3">
    <citation type="journal article" date="2004" name="DNA Res.">
        <title>Complete genome sequence of Yersinia pestis strain 91001, an isolate avirulent to humans.</title>
        <authorList>
            <person name="Song Y."/>
            <person name="Tong Z."/>
            <person name="Wang J."/>
            <person name="Wang L."/>
            <person name="Guo Z."/>
            <person name="Han Y."/>
            <person name="Zhang J."/>
            <person name="Pei D."/>
            <person name="Zhou D."/>
            <person name="Qin H."/>
            <person name="Pang X."/>
            <person name="Han Y."/>
            <person name="Zhai J."/>
            <person name="Li M."/>
            <person name="Cui B."/>
            <person name="Qi Z."/>
            <person name="Jin L."/>
            <person name="Dai R."/>
            <person name="Chen F."/>
            <person name="Li S."/>
            <person name="Ye C."/>
            <person name="Du Z."/>
            <person name="Lin W."/>
            <person name="Wang J."/>
            <person name="Yu J."/>
            <person name="Yang H."/>
            <person name="Wang J."/>
            <person name="Huang P."/>
            <person name="Yang R."/>
        </authorList>
    </citation>
    <scope>NUCLEOTIDE SEQUENCE [LARGE SCALE GENOMIC DNA]</scope>
    <source>
        <strain>91001 / Biovar Mediaevalis</strain>
    </source>
</reference>
<organism>
    <name type="scientific">Yersinia pestis</name>
    <dbReference type="NCBI Taxonomy" id="632"/>
    <lineage>
        <taxon>Bacteria</taxon>
        <taxon>Pseudomonadati</taxon>
        <taxon>Pseudomonadota</taxon>
        <taxon>Gammaproteobacteria</taxon>
        <taxon>Enterobacterales</taxon>
        <taxon>Yersiniaceae</taxon>
        <taxon>Yersinia</taxon>
    </lineage>
</organism>
<protein>
    <recommendedName>
        <fullName evidence="1">DNA polymerase IV</fullName>
        <shortName evidence="1">Pol IV</shortName>
        <ecNumber evidence="1">2.7.7.7</ecNumber>
    </recommendedName>
</protein>
<keyword id="KW-0963">Cytoplasm</keyword>
<keyword id="KW-0227">DNA damage</keyword>
<keyword id="KW-0234">DNA repair</keyword>
<keyword id="KW-0235">DNA replication</keyword>
<keyword id="KW-0238">DNA-binding</keyword>
<keyword id="KW-0239">DNA-directed DNA polymerase</keyword>
<keyword id="KW-0460">Magnesium</keyword>
<keyword id="KW-0479">Metal-binding</keyword>
<keyword id="KW-0515">Mutator protein</keyword>
<keyword id="KW-0548">Nucleotidyltransferase</keyword>
<keyword id="KW-1185">Reference proteome</keyword>
<keyword id="KW-0808">Transferase</keyword>